<dbReference type="EC" id="6.1.1.16" evidence="1"/>
<dbReference type="EMBL" id="CP000458">
    <property type="protein sequence ID" value="ABK08829.1"/>
    <property type="molecule type" value="Genomic_DNA"/>
</dbReference>
<dbReference type="RefSeq" id="WP_006478431.1">
    <property type="nucleotide sequence ID" value="NC_008542.1"/>
</dbReference>
<dbReference type="SMR" id="A0K8K2"/>
<dbReference type="KEGG" id="bch:Bcen2424_2078"/>
<dbReference type="HOGENOM" id="CLU_013528_0_1_4"/>
<dbReference type="GO" id="GO:0005829">
    <property type="term" value="C:cytosol"/>
    <property type="evidence" value="ECO:0007669"/>
    <property type="project" value="TreeGrafter"/>
</dbReference>
<dbReference type="GO" id="GO:0005524">
    <property type="term" value="F:ATP binding"/>
    <property type="evidence" value="ECO:0007669"/>
    <property type="project" value="UniProtKB-UniRule"/>
</dbReference>
<dbReference type="GO" id="GO:0004817">
    <property type="term" value="F:cysteine-tRNA ligase activity"/>
    <property type="evidence" value="ECO:0007669"/>
    <property type="project" value="UniProtKB-UniRule"/>
</dbReference>
<dbReference type="GO" id="GO:0008270">
    <property type="term" value="F:zinc ion binding"/>
    <property type="evidence" value="ECO:0007669"/>
    <property type="project" value="UniProtKB-UniRule"/>
</dbReference>
<dbReference type="GO" id="GO:0006423">
    <property type="term" value="P:cysteinyl-tRNA aminoacylation"/>
    <property type="evidence" value="ECO:0007669"/>
    <property type="project" value="UniProtKB-UniRule"/>
</dbReference>
<dbReference type="CDD" id="cd07963">
    <property type="entry name" value="Anticodon_Ia_Cys"/>
    <property type="match status" value="1"/>
</dbReference>
<dbReference type="CDD" id="cd00672">
    <property type="entry name" value="CysRS_core"/>
    <property type="match status" value="1"/>
</dbReference>
<dbReference type="FunFam" id="3.40.50.620:FF:000009">
    <property type="entry name" value="Cysteine--tRNA ligase"/>
    <property type="match status" value="1"/>
</dbReference>
<dbReference type="Gene3D" id="1.20.120.1910">
    <property type="entry name" value="Cysteine-tRNA ligase, C-terminal anti-codon recognition domain"/>
    <property type="match status" value="1"/>
</dbReference>
<dbReference type="Gene3D" id="3.40.50.620">
    <property type="entry name" value="HUPs"/>
    <property type="match status" value="1"/>
</dbReference>
<dbReference type="HAMAP" id="MF_00041">
    <property type="entry name" value="Cys_tRNA_synth"/>
    <property type="match status" value="1"/>
</dbReference>
<dbReference type="InterPro" id="IPR015803">
    <property type="entry name" value="Cys-tRNA-ligase"/>
</dbReference>
<dbReference type="InterPro" id="IPR015273">
    <property type="entry name" value="Cys-tRNA-synt_Ia_DALR"/>
</dbReference>
<dbReference type="InterPro" id="IPR024909">
    <property type="entry name" value="Cys-tRNA/MSH_ligase"/>
</dbReference>
<dbReference type="InterPro" id="IPR056411">
    <property type="entry name" value="CysS_C"/>
</dbReference>
<dbReference type="InterPro" id="IPR014729">
    <property type="entry name" value="Rossmann-like_a/b/a_fold"/>
</dbReference>
<dbReference type="InterPro" id="IPR032678">
    <property type="entry name" value="tRNA-synt_1_cat_dom"/>
</dbReference>
<dbReference type="InterPro" id="IPR009080">
    <property type="entry name" value="tRNAsynth_Ia_anticodon-bd"/>
</dbReference>
<dbReference type="NCBIfam" id="TIGR00435">
    <property type="entry name" value="cysS"/>
    <property type="match status" value="1"/>
</dbReference>
<dbReference type="PANTHER" id="PTHR10890:SF3">
    <property type="entry name" value="CYSTEINE--TRNA LIGASE, CYTOPLASMIC"/>
    <property type="match status" value="1"/>
</dbReference>
<dbReference type="PANTHER" id="PTHR10890">
    <property type="entry name" value="CYSTEINYL-TRNA SYNTHETASE"/>
    <property type="match status" value="1"/>
</dbReference>
<dbReference type="Pfam" id="PF23493">
    <property type="entry name" value="CysS_C"/>
    <property type="match status" value="1"/>
</dbReference>
<dbReference type="Pfam" id="PF09190">
    <property type="entry name" value="DALR_2"/>
    <property type="match status" value="1"/>
</dbReference>
<dbReference type="Pfam" id="PF01406">
    <property type="entry name" value="tRNA-synt_1e"/>
    <property type="match status" value="1"/>
</dbReference>
<dbReference type="PRINTS" id="PR00983">
    <property type="entry name" value="TRNASYNTHCYS"/>
</dbReference>
<dbReference type="SMART" id="SM00840">
    <property type="entry name" value="DALR_2"/>
    <property type="match status" value="1"/>
</dbReference>
<dbReference type="SUPFAM" id="SSF47323">
    <property type="entry name" value="Anticodon-binding domain of a subclass of class I aminoacyl-tRNA synthetases"/>
    <property type="match status" value="1"/>
</dbReference>
<dbReference type="SUPFAM" id="SSF52374">
    <property type="entry name" value="Nucleotidylyl transferase"/>
    <property type="match status" value="1"/>
</dbReference>
<organism>
    <name type="scientific">Burkholderia cenocepacia (strain HI2424)</name>
    <dbReference type="NCBI Taxonomy" id="331272"/>
    <lineage>
        <taxon>Bacteria</taxon>
        <taxon>Pseudomonadati</taxon>
        <taxon>Pseudomonadota</taxon>
        <taxon>Betaproteobacteria</taxon>
        <taxon>Burkholderiales</taxon>
        <taxon>Burkholderiaceae</taxon>
        <taxon>Burkholderia</taxon>
        <taxon>Burkholderia cepacia complex</taxon>
    </lineage>
</organism>
<proteinExistence type="inferred from homology"/>
<accession>A0K8K2</accession>
<gene>
    <name evidence="1" type="primary">cysS</name>
    <name type="ordered locus">Bcen2424_2078</name>
</gene>
<name>SYC_BURCH</name>
<reference key="1">
    <citation type="submission" date="2006-08" db="EMBL/GenBank/DDBJ databases">
        <title>Complete sequence of chromosome 1 of Burkholderia cenocepacia HI2424.</title>
        <authorList>
            <person name="Copeland A."/>
            <person name="Lucas S."/>
            <person name="Lapidus A."/>
            <person name="Barry K."/>
            <person name="Detter J.C."/>
            <person name="Glavina del Rio T."/>
            <person name="Hammon N."/>
            <person name="Israni S."/>
            <person name="Pitluck S."/>
            <person name="Chain P."/>
            <person name="Malfatti S."/>
            <person name="Shin M."/>
            <person name="Vergez L."/>
            <person name="Schmutz J."/>
            <person name="Larimer F."/>
            <person name="Land M."/>
            <person name="Hauser L."/>
            <person name="Kyrpides N."/>
            <person name="Kim E."/>
            <person name="LiPuma J.J."/>
            <person name="Gonzalez C.F."/>
            <person name="Konstantinidis K."/>
            <person name="Tiedje J.M."/>
            <person name="Richardson P."/>
        </authorList>
    </citation>
    <scope>NUCLEOTIDE SEQUENCE [LARGE SCALE GENOMIC DNA]</scope>
    <source>
        <strain>HI2424</strain>
    </source>
</reference>
<sequence length="465" mass="52082">MESLRIYNTLARDKQVFVPRQPGEVRMYVCGITVYDYCHVGHARMLVVFDLVQRWLRAIGYRVTYVRNITDIDDKIIRRAVENGETIKSLTDRFIGAMHEDETALGIQRPDVEPRATQFIPQMLGMIETLETNGYAYQAADGDVNYSVRKFADYGKLSGKSLDDLRAGERVAANDAKQDPLDFVLWKRAKADEPEGASWASKYGMGRPGWHIECSAMGCSLLGNHFDIHGGGQDLQFPHHENEIAQSEGATGETFVNYWMHNGFVQVDNEKMSKSLGNFFTIREVLERYDAEVVRFFIVRTHYRSPLNYSDVHLDDARASLTRLYTALKDVEPDTLALDWNEPHAQRFAAAMNDDFNTPVAVATLFELAGEVNRTRDASLARQLKQLAGLLGLLGREPRAFLQQASGAAQAGGLAADEIEAQIAARVAAKQAKDYAEADRIRAELLEAGIALEDKPGGSTEWRRV</sequence>
<keyword id="KW-0030">Aminoacyl-tRNA synthetase</keyword>
<keyword id="KW-0067">ATP-binding</keyword>
<keyword id="KW-0963">Cytoplasm</keyword>
<keyword id="KW-0436">Ligase</keyword>
<keyword id="KW-0479">Metal-binding</keyword>
<keyword id="KW-0547">Nucleotide-binding</keyword>
<keyword id="KW-0648">Protein biosynthesis</keyword>
<keyword id="KW-0862">Zinc</keyword>
<protein>
    <recommendedName>
        <fullName evidence="1">Cysteine--tRNA ligase</fullName>
        <ecNumber evidence="1">6.1.1.16</ecNumber>
    </recommendedName>
    <alternativeName>
        <fullName evidence="1">Cysteinyl-tRNA synthetase</fullName>
        <shortName evidence="1">CysRS</shortName>
    </alternativeName>
</protein>
<comment type="catalytic activity">
    <reaction evidence="1">
        <text>tRNA(Cys) + L-cysteine + ATP = L-cysteinyl-tRNA(Cys) + AMP + diphosphate</text>
        <dbReference type="Rhea" id="RHEA:17773"/>
        <dbReference type="Rhea" id="RHEA-COMP:9661"/>
        <dbReference type="Rhea" id="RHEA-COMP:9679"/>
        <dbReference type="ChEBI" id="CHEBI:30616"/>
        <dbReference type="ChEBI" id="CHEBI:33019"/>
        <dbReference type="ChEBI" id="CHEBI:35235"/>
        <dbReference type="ChEBI" id="CHEBI:78442"/>
        <dbReference type="ChEBI" id="CHEBI:78517"/>
        <dbReference type="ChEBI" id="CHEBI:456215"/>
        <dbReference type="EC" id="6.1.1.16"/>
    </reaction>
</comment>
<comment type="cofactor">
    <cofactor evidence="1">
        <name>Zn(2+)</name>
        <dbReference type="ChEBI" id="CHEBI:29105"/>
    </cofactor>
    <text evidence="1">Binds 1 zinc ion per subunit.</text>
</comment>
<comment type="subunit">
    <text evidence="1">Monomer.</text>
</comment>
<comment type="subcellular location">
    <subcellularLocation>
        <location evidence="1">Cytoplasm</location>
    </subcellularLocation>
</comment>
<comment type="similarity">
    <text evidence="1">Belongs to the class-I aminoacyl-tRNA synthetase family.</text>
</comment>
<evidence type="ECO:0000255" key="1">
    <source>
        <dbReference type="HAMAP-Rule" id="MF_00041"/>
    </source>
</evidence>
<feature type="chain" id="PRO_1000006566" description="Cysteine--tRNA ligase">
    <location>
        <begin position="1"/>
        <end position="465"/>
    </location>
</feature>
<feature type="short sequence motif" description="'HIGH' region">
    <location>
        <begin position="32"/>
        <end position="42"/>
    </location>
</feature>
<feature type="short sequence motif" description="'KMSKS' region">
    <location>
        <begin position="271"/>
        <end position="275"/>
    </location>
</feature>
<feature type="binding site" evidence="1">
    <location>
        <position position="30"/>
    </location>
    <ligand>
        <name>Zn(2+)</name>
        <dbReference type="ChEBI" id="CHEBI:29105"/>
    </ligand>
</feature>
<feature type="binding site" evidence="1">
    <location>
        <position position="214"/>
    </location>
    <ligand>
        <name>Zn(2+)</name>
        <dbReference type="ChEBI" id="CHEBI:29105"/>
    </ligand>
</feature>
<feature type="binding site" evidence="1">
    <location>
        <position position="239"/>
    </location>
    <ligand>
        <name>Zn(2+)</name>
        <dbReference type="ChEBI" id="CHEBI:29105"/>
    </ligand>
</feature>
<feature type="binding site" evidence="1">
    <location>
        <position position="243"/>
    </location>
    <ligand>
        <name>Zn(2+)</name>
        <dbReference type="ChEBI" id="CHEBI:29105"/>
    </ligand>
</feature>
<feature type="binding site" evidence="1">
    <location>
        <position position="274"/>
    </location>
    <ligand>
        <name>ATP</name>
        <dbReference type="ChEBI" id="CHEBI:30616"/>
    </ligand>
</feature>